<gene>
    <name evidence="1" type="primary">ruvB</name>
    <name type="ordered locus">FTT_1013c</name>
</gene>
<sequence length="348" mass="38627">MIETDRIISANTAQTNDENVIDRAIRPKTLAEYEGQPAVREQMEIFIQAAKARKDALDHTLIFGPPGLGKTTLSNIIANEMGVELKQTSGPVLEKAGDLAALLTNLEENDVLFIDEIHRLSPVVEEILYPAMEDYQLDIMIGEGPAARSIKIDLPPFTLVGATTRAGLLTSPLRDRFGIIQRLEFYSIDDLSKIVYRSAKLLNLDITTDGAMEIAKRSRGTPRIANRLLRRVRDYAQVKGSGVICFEIADKALSMLKVDPVGFDHMDHRYLLTLMEKFAGGPVGLDTMSAALSEEKGTIEDVIEPYLIQQGYIMRTARGRIATLLAYNHFKLKIPDNLSADQQQTLSI</sequence>
<name>RUVB_FRATT</name>
<reference key="1">
    <citation type="journal article" date="2005" name="Nat. Genet.">
        <title>The complete genome sequence of Francisella tularensis, the causative agent of tularemia.</title>
        <authorList>
            <person name="Larsson P."/>
            <person name="Oyston P.C.F."/>
            <person name="Chain P."/>
            <person name="Chu M.C."/>
            <person name="Duffield M."/>
            <person name="Fuxelius H.-H."/>
            <person name="Garcia E."/>
            <person name="Haelltorp G."/>
            <person name="Johansson D."/>
            <person name="Isherwood K.E."/>
            <person name="Karp P.D."/>
            <person name="Larsson E."/>
            <person name="Liu Y."/>
            <person name="Michell S."/>
            <person name="Prior J."/>
            <person name="Prior R."/>
            <person name="Malfatti S."/>
            <person name="Sjoestedt A."/>
            <person name="Svensson K."/>
            <person name="Thompson N."/>
            <person name="Vergez L."/>
            <person name="Wagg J.K."/>
            <person name="Wren B.W."/>
            <person name="Lindler L.E."/>
            <person name="Andersson S.G.E."/>
            <person name="Forsman M."/>
            <person name="Titball R.W."/>
        </authorList>
    </citation>
    <scope>NUCLEOTIDE SEQUENCE [LARGE SCALE GENOMIC DNA]</scope>
    <source>
        <strain>SCHU S4 / Schu 4</strain>
    </source>
</reference>
<evidence type="ECO:0000255" key="1">
    <source>
        <dbReference type="HAMAP-Rule" id="MF_00016"/>
    </source>
</evidence>
<accession>Q5NG44</accession>
<comment type="function">
    <text evidence="1">The RuvA-RuvB-RuvC complex processes Holliday junction (HJ) DNA during genetic recombination and DNA repair, while the RuvA-RuvB complex plays an important role in the rescue of blocked DNA replication forks via replication fork reversal (RFR). RuvA specifically binds to HJ cruciform DNA, conferring on it an open structure. The RuvB hexamer acts as an ATP-dependent pump, pulling dsDNA into and through the RuvAB complex. RuvB forms 2 homohexamers on either side of HJ DNA bound by 1 or 2 RuvA tetramers; 4 subunits per hexamer contact DNA at a time. Coordinated motions by a converter formed by DNA-disengaged RuvB subunits stimulates ATP hydrolysis and nucleotide exchange. Immobilization of the converter enables RuvB to convert the ATP-contained energy into a lever motion, pulling 2 nucleotides of DNA out of the RuvA tetramer per ATP hydrolyzed, thus driving DNA branch migration. The RuvB motors rotate together with the DNA substrate, which together with the progressing nucleotide cycle form the mechanistic basis for DNA recombination by continuous HJ branch migration. Branch migration allows RuvC to scan DNA until it finds its consensus sequence, where it cleaves and resolves cruciform DNA.</text>
</comment>
<comment type="catalytic activity">
    <reaction evidence="1">
        <text>ATP + H2O = ADP + phosphate + H(+)</text>
        <dbReference type="Rhea" id="RHEA:13065"/>
        <dbReference type="ChEBI" id="CHEBI:15377"/>
        <dbReference type="ChEBI" id="CHEBI:15378"/>
        <dbReference type="ChEBI" id="CHEBI:30616"/>
        <dbReference type="ChEBI" id="CHEBI:43474"/>
        <dbReference type="ChEBI" id="CHEBI:456216"/>
    </reaction>
</comment>
<comment type="subunit">
    <text evidence="1">Homohexamer. Forms an RuvA(8)-RuvB(12)-Holliday junction (HJ) complex. HJ DNA is sandwiched between 2 RuvA tetramers; dsDNA enters through RuvA and exits via RuvB. An RuvB hexamer assembles on each DNA strand where it exits the tetramer. Each RuvB hexamer is contacted by two RuvA subunits (via domain III) on 2 adjacent RuvB subunits; this complex drives branch migration. In the full resolvosome a probable DNA-RuvA(4)-RuvB(12)-RuvC(2) complex forms which resolves the HJ.</text>
</comment>
<comment type="subcellular location">
    <subcellularLocation>
        <location evidence="1">Cytoplasm</location>
    </subcellularLocation>
</comment>
<comment type="domain">
    <text evidence="1">Has 3 domains, the large (RuvB-L) and small ATPase (RuvB-S) domains and the C-terminal head (RuvB-H) domain. The head domain binds DNA, while the ATPase domains jointly bind ATP, ADP or are empty depending on the state of the subunit in the translocation cycle. During a single DNA translocation step the structure of each domain remains the same, but their relative positions change.</text>
</comment>
<comment type="similarity">
    <text evidence="1">Belongs to the RuvB family.</text>
</comment>
<protein>
    <recommendedName>
        <fullName evidence="1">Holliday junction branch migration complex subunit RuvB</fullName>
        <ecNumber evidence="1">3.6.4.-</ecNumber>
    </recommendedName>
</protein>
<proteinExistence type="inferred from homology"/>
<feature type="chain" id="PRO_0000235369" description="Holliday junction branch migration complex subunit RuvB">
    <location>
        <begin position="1"/>
        <end position="348"/>
    </location>
</feature>
<feature type="region of interest" description="Large ATPase domain (RuvB-L)" evidence="1">
    <location>
        <begin position="4"/>
        <end position="186"/>
    </location>
</feature>
<feature type="region of interest" description="Small ATPAse domain (RuvB-S)" evidence="1">
    <location>
        <begin position="187"/>
        <end position="257"/>
    </location>
</feature>
<feature type="region of interest" description="Head domain (RuvB-H)" evidence="1">
    <location>
        <begin position="260"/>
        <end position="348"/>
    </location>
</feature>
<feature type="binding site" evidence="1">
    <location>
        <position position="25"/>
    </location>
    <ligand>
        <name>ATP</name>
        <dbReference type="ChEBI" id="CHEBI:30616"/>
    </ligand>
</feature>
<feature type="binding site" evidence="1">
    <location>
        <position position="26"/>
    </location>
    <ligand>
        <name>ATP</name>
        <dbReference type="ChEBI" id="CHEBI:30616"/>
    </ligand>
</feature>
<feature type="binding site" evidence="1">
    <location>
        <position position="67"/>
    </location>
    <ligand>
        <name>ATP</name>
        <dbReference type="ChEBI" id="CHEBI:30616"/>
    </ligand>
</feature>
<feature type="binding site" evidence="1">
    <location>
        <position position="70"/>
    </location>
    <ligand>
        <name>ATP</name>
        <dbReference type="ChEBI" id="CHEBI:30616"/>
    </ligand>
</feature>
<feature type="binding site" evidence="1">
    <location>
        <position position="71"/>
    </location>
    <ligand>
        <name>ATP</name>
        <dbReference type="ChEBI" id="CHEBI:30616"/>
    </ligand>
</feature>
<feature type="binding site" evidence="1">
    <location>
        <position position="71"/>
    </location>
    <ligand>
        <name>Mg(2+)</name>
        <dbReference type="ChEBI" id="CHEBI:18420"/>
    </ligand>
</feature>
<feature type="binding site" evidence="1">
    <location>
        <position position="72"/>
    </location>
    <ligand>
        <name>ATP</name>
        <dbReference type="ChEBI" id="CHEBI:30616"/>
    </ligand>
</feature>
<feature type="binding site" evidence="1">
    <location>
        <begin position="133"/>
        <end position="135"/>
    </location>
    <ligand>
        <name>ATP</name>
        <dbReference type="ChEBI" id="CHEBI:30616"/>
    </ligand>
</feature>
<feature type="binding site" evidence="1">
    <location>
        <position position="176"/>
    </location>
    <ligand>
        <name>ATP</name>
        <dbReference type="ChEBI" id="CHEBI:30616"/>
    </ligand>
</feature>
<feature type="binding site" evidence="1">
    <location>
        <position position="186"/>
    </location>
    <ligand>
        <name>ATP</name>
        <dbReference type="ChEBI" id="CHEBI:30616"/>
    </ligand>
</feature>
<feature type="binding site" evidence="1">
    <location>
        <position position="223"/>
    </location>
    <ligand>
        <name>ATP</name>
        <dbReference type="ChEBI" id="CHEBI:30616"/>
    </ligand>
</feature>
<feature type="binding site" evidence="1">
    <location>
        <position position="315"/>
    </location>
    <ligand>
        <name>DNA</name>
        <dbReference type="ChEBI" id="CHEBI:16991"/>
    </ligand>
</feature>
<feature type="binding site" evidence="1">
    <location>
        <position position="320"/>
    </location>
    <ligand>
        <name>DNA</name>
        <dbReference type="ChEBI" id="CHEBI:16991"/>
    </ligand>
</feature>
<keyword id="KW-0067">ATP-binding</keyword>
<keyword id="KW-0963">Cytoplasm</keyword>
<keyword id="KW-0227">DNA damage</keyword>
<keyword id="KW-0233">DNA recombination</keyword>
<keyword id="KW-0234">DNA repair</keyword>
<keyword id="KW-0238">DNA-binding</keyword>
<keyword id="KW-0378">Hydrolase</keyword>
<keyword id="KW-0547">Nucleotide-binding</keyword>
<keyword id="KW-1185">Reference proteome</keyword>
<dbReference type="EC" id="3.6.4.-" evidence="1"/>
<dbReference type="EMBL" id="AJ749949">
    <property type="protein sequence ID" value="CAG45646.1"/>
    <property type="molecule type" value="Genomic_DNA"/>
</dbReference>
<dbReference type="RefSeq" id="WP_003016007.1">
    <property type="nucleotide sequence ID" value="NZ_CP010290.1"/>
</dbReference>
<dbReference type="RefSeq" id="YP_169998.1">
    <property type="nucleotide sequence ID" value="NC_006570.2"/>
</dbReference>
<dbReference type="SMR" id="Q5NG44"/>
<dbReference type="IntAct" id="Q5NG44">
    <property type="interactions" value="2"/>
</dbReference>
<dbReference type="STRING" id="177416.FTT_1013c"/>
<dbReference type="DNASU" id="3191291"/>
<dbReference type="EnsemblBacteria" id="CAG45646">
    <property type="protein sequence ID" value="CAG45646"/>
    <property type="gene ID" value="FTT_1013c"/>
</dbReference>
<dbReference type="KEGG" id="ftu:FTT_1013c"/>
<dbReference type="eggNOG" id="COG2255">
    <property type="taxonomic scope" value="Bacteria"/>
</dbReference>
<dbReference type="OrthoDB" id="9804478at2"/>
<dbReference type="Proteomes" id="UP000001174">
    <property type="component" value="Chromosome"/>
</dbReference>
<dbReference type="GO" id="GO:0005737">
    <property type="term" value="C:cytoplasm"/>
    <property type="evidence" value="ECO:0007669"/>
    <property type="project" value="UniProtKB-SubCell"/>
</dbReference>
<dbReference type="GO" id="GO:0048476">
    <property type="term" value="C:Holliday junction resolvase complex"/>
    <property type="evidence" value="ECO:0007669"/>
    <property type="project" value="UniProtKB-UniRule"/>
</dbReference>
<dbReference type="GO" id="GO:0005524">
    <property type="term" value="F:ATP binding"/>
    <property type="evidence" value="ECO:0007669"/>
    <property type="project" value="UniProtKB-UniRule"/>
</dbReference>
<dbReference type="GO" id="GO:0016887">
    <property type="term" value="F:ATP hydrolysis activity"/>
    <property type="evidence" value="ECO:0007669"/>
    <property type="project" value="InterPro"/>
</dbReference>
<dbReference type="GO" id="GO:0000400">
    <property type="term" value="F:four-way junction DNA binding"/>
    <property type="evidence" value="ECO:0007669"/>
    <property type="project" value="UniProtKB-UniRule"/>
</dbReference>
<dbReference type="GO" id="GO:0009378">
    <property type="term" value="F:four-way junction helicase activity"/>
    <property type="evidence" value="ECO:0007669"/>
    <property type="project" value="InterPro"/>
</dbReference>
<dbReference type="GO" id="GO:0006310">
    <property type="term" value="P:DNA recombination"/>
    <property type="evidence" value="ECO:0007669"/>
    <property type="project" value="UniProtKB-UniRule"/>
</dbReference>
<dbReference type="GO" id="GO:0006281">
    <property type="term" value="P:DNA repair"/>
    <property type="evidence" value="ECO:0007669"/>
    <property type="project" value="UniProtKB-UniRule"/>
</dbReference>
<dbReference type="CDD" id="cd00009">
    <property type="entry name" value="AAA"/>
    <property type="match status" value="1"/>
</dbReference>
<dbReference type="FunFam" id="1.10.8.60:FF:000023">
    <property type="entry name" value="Holliday junction ATP-dependent DNA helicase RuvB"/>
    <property type="match status" value="1"/>
</dbReference>
<dbReference type="FunFam" id="3.40.50.300:FF:000073">
    <property type="entry name" value="Holliday junction ATP-dependent DNA helicase RuvB"/>
    <property type="match status" value="1"/>
</dbReference>
<dbReference type="Gene3D" id="1.10.8.60">
    <property type="match status" value="1"/>
</dbReference>
<dbReference type="Gene3D" id="3.40.50.300">
    <property type="entry name" value="P-loop containing nucleotide triphosphate hydrolases"/>
    <property type="match status" value="1"/>
</dbReference>
<dbReference type="Gene3D" id="1.10.10.10">
    <property type="entry name" value="Winged helix-like DNA-binding domain superfamily/Winged helix DNA-binding domain"/>
    <property type="match status" value="1"/>
</dbReference>
<dbReference type="HAMAP" id="MF_00016">
    <property type="entry name" value="DNA_HJ_migration_RuvB"/>
    <property type="match status" value="1"/>
</dbReference>
<dbReference type="InterPro" id="IPR003593">
    <property type="entry name" value="AAA+_ATPase"/>
</dbReference>
<dbReference type="InterPro" id="IPR041445">
    <property type="entry name" value="AAA_lid_4"/>
</dbReference>
<dbReference type="InterPro" id="IPR004605">
    <property type="entry name" value="DNA_helicase_Holl-junc_RuvB"/>
</dbReference>
<dbReference type="InterPro" id="IPR027417">
    <property type="entry name" value="P-loop_NTPase"/>
</dbReference>
<dbReference type="InterPro" id="IPR008824">
    <property type="entry name" value="RuvB-like_N"/>
</dbReference>
<dbReference type="InterPro" id="IPR008823">
    <property type="entry name" value="RuvB_C"/>
</dbReference>
<dbReference type="InterPro" id="IPR036388">
    <property type="entry name" value="WH-like_DNA-bd_sf"/>
</dbReference>
<dbReference type="InterPro" id="IPR036390">
    <property type="entry name" value="WH_DNA-bd_sf"/>
</dbReference>
<dbReference type="NCBIfam" id="NF000868">
    <property type="entry name" value="PRK00080.1"/>
    <property type="match status" value="1"/>
</dbReference>
<dbReference type="NCBIfam" id="TIGR00635">
    <property type="entry name" value="ruvB"/>
    <property type="match status" value="1"/>
</dbReference>
<dbReference type="PANTHER" id="PTHR42848">
    <property type="match status" value="1"/>
</dbReference>
<dbReference type="PANTHER" id="PTHR42848:SF1">
    <property type="entry name" value="HOLLIDAY JUNCTION BRANCH MIGRATION COMPLEX SUBUNIT RUVB"/>
    <property type="match status" value="1"/>
</dbReference>
<dbReference type="Pfam" id="PF17864">
    <property type="entry name" value="AAA_lid_4"/>
    <property type="match status" value="1"/>
</dbReference>
<dbReference type="Pfam" id="PF05491">
    <property type="entry name" value="RuvB_C"/>
    <property type="match status" value="1"/>
</dbReference>
<dbReference type="Pfam" id="PF05496">
    <property type="entry name" value="RuvB_N"/>
    <property type="match status" value="1"/>
</dbReference>
<dbReference type="SMART" id="SM00382">
    <property type="entry name" value="AAA"/>
    <property type="match status" value="1"/>
</dbReference>
<dbReference type="SUPFAM" id="SSF52540">
    <property type="entry name" value="P-loop containing nucleoside triphosphate hydrolases"/>
    <property type="match status" value="1"/>
</dbReference>
<dbReference type="SUPFAM" id="SSF46785">
    <property type="entry name" value="Winged helix' DNA-binding domain"/>
    <property type="match status" value="1"/>
</dbReference>
<organism>
    <name type="scientific">Francisella tularensis subsp. tularensis (strain SCHU S4 / Schu 4)</name>
    <dbReference type="NCBI Taxonomy" id="177416"/>
    <lineage>
        <taxon>Bacteria</taxon>
        <taxon>Pseudomonadati</taxon>
        <taxon>Pseudomonadota</taxon>
        <taxon>Gammaproteobacteria</taxon>
        <taxon>Thiotrichales</taxon>
        <taxon>Francisellaceae</taxon>
        <taxon>Francisella</taxon>
    </lineage>
</organism>